<gene>
    <name type="ordered locus">TC_0068</name>
</gene>
<protein>
    <recommendedName>
        <fullName>Uncharacterized protein TC_0068</fullName>
    </recommendedName>
</protein>
<dbReference type="EMBL" id="AE002160">
    <property type="protein sequence ID" value="AAF38951.1"/>
    <property type="molecule type" value="Genomic_DNA"/>
</dbReference>
<dbReference type="PIR" id="A81745">
    <property type="entry name" value="A81745"/>
</dbReference>
<dbReference type="RefSeq" id="WP_010229278.1">
    <property type="nucleotide sequence ID" value="NZ_CP027217.1"/>
</dbReference>
<dbReference type="SMR" id="Q9PLN1"/>
<dbReference type="GeneID" id="1245597"/>
<dbReference type="KEGG" id="cmu:TC_0068"/>
<dbReference type="HOGENOM" id="CLU_743345_0_0_0"/>
<dbReference type="OrthoDB" id="18966at2"/>
<dbReference type="Proteomes" id="UP000000800">
    <property type="component" value="Chromosome"/>
</dbReference>
<accession>Q9PLN1</accession>
<sequence length="392" mass="45695">MLLDSRFPTDYYLRILELAIRDSSCKLVYNRRIRMLETLPLDQKLSADQEEESSILREVISELLVHSGESYAISARLLAVIDIYLKQEQPSNSLFARIFRKKERVRKRQIIDKLLLLKSILFFERQRPVKKVASVADSILRKSKGNFSSWEDFTHDVQSQKSGTEEEVPDSLRGRVEEDAASQMIVEVLLSFLDNQDMYLSVSFEILRNFLEEKVLSKRSLSPRSHDAVKKMKDLYLVSPEDFQTFVGGVITESLFQEEDQLVVGCVIFSQEGQELFDSWKGITKKYPHDMLYTQAFLAEVVLHVVQHHIHLNAKVKPTSPEQVGSLYSIRDHSPRAWARMMRVLLMRWLLDYHFDVYAHLKEEILRCPPRPPFWQMIPSESGDGTFHREAR</sequence>
<evidence type="ECO:0000305" key="1"/>
<reference key="1">
    <citation type="journal article" date="2000" name="Nucleic Acids Res.">
        <title>Genome sequences of Chlamydia trachomatis MoPn and Chlamydia pneumoniae AR39.</title>
        <authorList>
            <person name="Read T.D."/>
            <person name="Brunham R.C."/>
            <person name="Shen C."/>
            <person name="Gill S.R."/>
            <person name="Heidelberg J.F."/>
            <person name="White O."/>
            <person name="Hickey E.K."/>
            <person name="Peterson J.D."/>
            <person name="Utterback T.R."/>
            <person name="Berry K.J."/>
            <person name="Bass S."/>
            <person name="Linher K.D."/>
            <person name="Weidman J.F."/>
            <person name="Khouri H.M."/>
            <person name="Craven B."/>
            <person name="Bowman C."/>
            <person name="Dodson R.J."/>
            <person name="Gwinn M.L."/>
            <person name="Nelson W.C."/>
            <person name="DeBoy R.T."/>
            <person name="Kolonay J.F."/>
            <person name="McClarty G."/>
            <person name="Salzberg S.L."/>
            <person name="Eisen J.A."/>
            <person name="Fraser C.M."/>
        </authorList>
    </citation>
    <scope>NUCLEOTIDE SEQUENCE [LARGE SCALE GENOMIC DNA]</scope>
    <source>
        <strain>MoPn / Nigg</strain>
    </source>
</reference>
<organism>
    <name type="scientific">Chlamydia muridarum (strain MoPn / Nigg)</name>
    <dbReference type="NCBI Taxonomy" id="243161"/>
    <lineage>
        <taxon>Bacteria</taxon>
        <taxon>Pseudomonadati</taxon>
        <taxon>Chlamydiota</taxon>
        <taxon>Chlamydiia</taxon>
        <taxon>Chlamydiales</taxon>
        <taxon>Chlamydiaceae</taxon>
        <taxon>Chlamydia/Chlamydophila group</taxon>
        <taxon>Chlamydia</taxon>
    </lineage>
</organism>
<comment type="similarity">
    <text evidence="1">Belongs to the chlamydial CPn_0675/CT_696/TC_0068 family.</text>
</comment>
<feature type="chain" id="PRO_0000218409" description="Uncharacterized protein TC_0068">
    <location>
        <begin position="1"/>
        <end position="392"/>
    </location>
</feature>
<proteinExistence type="inferred from homology"/>
<name>Y068_CHLMU</name>